<sequence length="427" mass="46299">MGNCVARSGTAVDAGGDGGEDGKRRRRRWKAPREDQLGMVPGRIFSNDGRSRTATVYTQQGRKGINQDAMLVWDGFGGEDDGVLCGVFDGHGPHGHVVARRVRDSLPLRLMSAARDSGADMPAAAWRKAFARAYKAMDKDLRSHPSLDCFCSGSTAVTVLKLGSDLYMANIGDSRAVLGSREATGGGMVAVQLTVDLKPDVPSEAERIKKCRGRVFALQDEPEVPRVWLPFDDAPGLAMARAFGDFCLKDYGVISVPEFFHWSLTEKDQFVILASDGVWDVLSNQEAVDIVSASPSRSKAAKSLVEAATREWKTKYPTSKIDDCAVVCLYLDGKMDHERDSTASLDNISIEEGSVADPNEPQEQEPTLTRNFTVRTVAGSTQEKTLAGVDARIAGVANDQNWSGLDGVTRVNSLVQLPRFSEERAIG</sequence>
<protein>
    <recommendedName>
        <fullName>Probable protein phosphatase 2C 64</fullName>
        <shortName>OsPP2C64</shortName>
        <ecNumber>3.1.3.16</ecNumber>
    </recommendedName>
</protein>
<name>P2C64_ORYSJ</name>
<gene>
    <name type="ordered locus">Os07g0566200</name>
    <name type="ordered locus">LOC_Os07g37890</name>
    <name type="ORF">OJ1773_H01.121</name>
    <name type="ORF">OsJ_023811</name>
</gene>
<proteinExistence type="evidence at transcript level"/>
<comment type="catalytic activity">
    <reaction>
        <text>O-phospho-L-seryl-[protein] + H2O = L-seryl-[protein] + phosphate</text>
        <dbReference type="Rhea" id="RHEA:20629"/>
        <dbReference type="Rhea" id="RHEA-COMP:9863"/>
        <dbReference type="Rhea" id="RHEA-COMP:11604"/>
        <dbReference type="ChEBI" id="CHEBI:15377"/>
        <dbReference type="ChEBI" id="CHEBI:29999"/>
        <dbReference type="ChEBI" id="CHEBI:43474"/>
        <dbReference type="ChEBI" id="CHEBI:83421"/>
        <dbReference type="EC" id="3.1.3.16"/>
    </reaction>
</comment>
<comment type="catalytic activity">
    <reaction>
        <text>O-phospho-L-threonyl-[protein] + H2O = L-threonyl-[protein] + phosphate</text>
        <dbReference type="Rhea" id="RHEA:47004"/>
        <dbReference type="Rhea" id="RHEA-COMP:11060"/>
        <dbReference type="Rhea" id="RHEA-COMP:11605"/>
        <dbReference type="ChEBI" id="CHEBI:15377"/>
        <dbReference type="ChEBI" id="CHEBI:30013"/>
        <dbReference type="ChEBI" id="CHEBI:43474"/>
        <dbReference type="ChEBI" id="CHEBI:61977"/>
        <dbReference type="EC" id="3.1.3.16"/>
    </reaction>
</comment>
<comment type="cofactor">
    <cofactor evidence="1">
        <name>Mg(2+)</name>
        <dbReference type="ChEBI" id="CHEBI:18420"/>
    </cofactor>
    <cofactor evidence="1">
        <name>Mn(2+)</name>
        <dbReference type="ChEBI" id="CHEBI:29035"/>
    </cofactor>
    <text evidence="1">Binds 2 magnesium or manganese ions per subunit.</text>
</comment>
<comment type="similarity">
    <text evidence="4">Belongs to the PP2C family.</text>
</comment>
<evidence type="ECO:0000250" key="1"/>
<evidence type="ECO:0000255" key="2">
    <source>
        <dbReference type="PROSITE-ProRule" id="PRU01082"/>
    </source>
</evidence>
<evidence type="ECO:0000256" key="3">
    <source>
        <dbReference type="SAM" id="MobiDB-lite"/>
    </source>
</evidence>
<evidence type="ECO:0000305" key="4"/>
<organism>
    <name type="scientific">Oryza sativa subsp. japonica</name>
    <name type="common">Rice</name>
    <dbReference type="NCBI Taxonomy" id="39947"/>
    <lineage>
        <taxon>Eukaryota</taxon>
        <taxon>Viridiplantae</taxon>
        <taxon>Streptophyta</taxon>
        <taxon>Embryophyta</taxon>
        <taxon>Tracheophyta</taxon>
        <taxon>Spermatophyta</taxon>
        <taxon>Magnoliopsida</taxon>
        <taxon>Liliopsida</taxon>
        <taxon>Poales</taxon>
        <taxon>Poaceae</taxon>
        <taxon>BOP clade</taxon>
        <taxon>Oryzoideae</taxon>
        <taxon>Oryzeae</taxon>
        <taxon>Oryzinae</taxon>
        <taxon>Oryza</taxon>
        <taxon>Oryza sativa</taxon>
    </lineage>
</organism>
<reference key="1">
    <citation type="journal article" date="2005" name="Nature">
        <title>The map-based sequence of the rice genome.</title>
        <authorList>
            <consortium name="International rice genome sequencing project (IRGSP)"/>
        </authorList>
    </citation>
    <scope>NUCLEOTIDE SEQUENCE [LARGE SCALE GENOMIC DNA]</scope>
    <source>
        <strain>cv. Nipponbare</strain>
    </source>
</reference>
<reference key="2">
    <citation type="journal article" date="2008" name="Nucleic Acids Res.">
        <title>The rice annotation project database (RAP-DB): 2008 update.</title>
        <authorList>
            <consortium name="The rice annotation project (RAP)"/>
        </authorList>
    </citation>
    <scope>GENOME REANNOTATION</scope>
    <source>
        <strain>cv. Nipponbare</strain>
    </source>
</reference>
<reference key="3">
    <citation type="journal article" date="2013" name="Rice">
        <title>Improvement of the Oryza sativa Nipponbare reference genome using next generation sequence and optical map data.</title>
        <authorList>
            <person name="Kawahara Y."/>
            <person name="de la Bastide M."/>
            <person name="Hamilton J.P."/>
            <person name="Kanamori H."/>
            <person name="McCombie W.R."/>
            <person name="Ouyang S."/>
            <person name="Schwartz D.C."/>
            <person name="Tanaka T."/>
            <person name="Wu J."/>
            <person name="Zhou S."/>
            <person name="Childs K.L."/>
            <person name="Davidson R.M."/>
            <person name="Lin H."/>
            <person name="Quesada-Ocampo L."/>
            <person name="Vaillancourt B."/>
            <person name="Sakai H."/>
            <person name="Lee S.S."/>
            <person name="Kim J."/>
            <person name="Numa H."/>
            <person name="Itoh T."/>
            <person name="Buell C.R."/>
            <person name="Matsumoto T."/>
        </authorList>
    </citation>
    <scope>GENOME REANNOTATION</scope>
    <source>
        <strain>cv. Nipponbare</strain>
    </source>
</reference>
<reference key="4">
    <citation type="journal article" date="2005" name="PLoS Biol.">
        <title>The genomes of Oryza sativa: a history of duplications.</title>
        <authorList>
            <person name="Yu J."/>
            <person name="Wang J."/>
            <person name="Lin W."/>
            <person name="Li S."/>
            <person name="Li H."/>
            <person name="Zhou J."/>
            <person name="Ni P."/>
            <person name="Dong W."/>
            <person name="Hu S."/>
            <person name="Zeng C."/>
            <person name="Zhang J."/>
            <person name="Zhang Y."/>
            <person name="Li R."/>
            <person name="Xu Z."/>
            <person name="Li S."/>
            <person name="Li X."/>
            <person name="Zheng H."/>
            <person name="Cong L."/>
            <person name="Lin L."/>
            <person name="Yin J."/>
            <person name="Geng J."/>
            <person name="Li G."/>
            <person name="Shi J."/>
            <person name="Liu J."/>
            <person name="Lv H."/>
            <person name="Li J."/>
            <person name="Wang J."/>
            <person name="Deng Y."/>
            <person name="Ran L."/>
            <person name="Shi X."/>
            <person name="Wang X."/>
            <person name="Wu Q."/>
            <person name="Li C."/>
            <person name="Ren X."/>
            <person name="Wang J."/>
            <person name="Wang X."/>
            <person name="Li D."/>
            <person name="Liu D."/>
            <person name="Zhang X."/>
            <person name="Ji Z."/>
            <person name="Zhao W."/>
            <person name="Sun Y."/>
            <person name="Zhang Z."/>
            <person name="Bao J."/>
            <person name="Han Y."/>
            <person name="Dong L."/>
            <person name="Ji J."/>
            <person name="Chen P."/>
            <person name="Wu S."/>
            <person name="Liu J."/>
            <person name="Xiao Y."/>
            <person name="Bu D."/>
            <person name="Tan J."/>
            <person name="Yang L."/>
            <person name="Ye C."/>
            <person name="Zhang J."/>
            <person name="Xu J."/>
            <person name="Zhou Y."/>
            <person name="Yu Y."/>
            <person name="Zhang B."/>
            <person name="Zhuang S."/>
            <person name="Wei H."/>
            <person name="Liu B."/>
            <person name="Lei M."/>
            <person name="Yu H."/>
            <person name="Li Y."/>
            <person name="Xu H."/>
            <person name="Wei S."/>
            <person name="He X."/>
            <person name="Fang L."/>
            <person name="Zhang Z."/>
            <person name="Zhang Y."/>
            <person name="Huang X."/>
            <person name="Su Z."/>
            <person name="Tong W."/>
            <person name="Li J."/>
            <person name="Tong Z."/>
            <person name="Li S."/>
            <person name="Ye J."/>
            <person name="Wang L."/>
            <person name="Fang L."/>
            <person name="Lei T."/>
            <person name="Chen C.-S."/>
            <person name="Chen H.-C."/>
            <person name="Xu Z."/>
            <person name="Li H."/>
            <person name="Huang H."/>
            <person name="Zhang F."/>
            <person name="Xu H."/>
            <person name="Li N."/>
            <person name="Zhao C."/>
            <person name="Li S."/>
            <person name="Dong L."/>
            <person name="Huang Y."/>
            <person name="Li L."/>
            <person name="Xi Y."/>
            <person name="Qi Q."/>
            <person name="Li W."/>
            <person name="Zhang B."/>
            <person name="Hu W."/>
            <person name="Zhang Y."/>
            <person name="Tian X."/>
            <person name="Jiao Y."/>
            <person name="Liang X."/>
            <person name="Jin J."/>
            <person name="Gao L."/>
            <person name="Zheng W."/>
            <person name="Hao B."/>
            <person name="Liu S.-M."/>
            <person name="Wang W."/>
            <person name="Yuan L."/>
            <person name="Cao M."/>
            <person name="McDermott J."/>
            <person name="Samudrala R."/>
            <person name="Wang J."/>
            <person name="Wong G.K.-S."/>
            <person name="Yang H."/>
        </authorList>
    </citation>
    <scope>NUCLEOTIDE SEQUENCE [LARGE SCALE GENOMIC DNA]</scope>
    <source>
        <strain>cv. Nipponbare</strain>
    </source>
</reference>
<reference key="5">
    <citation type="journal article" date="2003" name="Science">
        <title>Collection, mapping, and annotation of over 28,000 cDNA clones from japonica rice.</title>
        <authorList>
            <consortium name="The rice full-length cDNA consortium"/>
        </authorList>
    </citation>
    <scope>NUCLEOTIDE SEQUENCE [LARGE SCALE MRNA]</scope>
    <source>
        <strain>cv. Nipponbare</strain>
    </source>
</reference>
<reference key="6">
    <citation type="journal article" date="2008" name="BMC Genomics">
        <title>Genome-wide and expression analysis of protein phosphatase 2C in rice and Arabidopsis.</title>
        <authorList>
            <person name="Xue T."/>
            <person name="Wang D."/>
            <person name="Zhang S."/>
            <person name="Ehlting J."/>
            <person name="Ni F."/>
            <person name="Jacab S."/>
            <person name="Zheng C."/>
            <person name="Zhong Y."/>
        </authorList>
    </citation>
    <scope>GENE FAMILY</scope>
    <scope>NOMENCLATURE</scope>
</reference>
<dbReference type="EC" id="3.1.3.16"/>
<dbReference type="EMBL" id="AP003932">
    <property type="protein sequence ID" value="BAC79670.1"/>
    <property type="molecule type" value="Genomic_DNA"/>
</dbReference>
<dbReference type="EMBL" id="AP008213">
    <property type="protein sequence ID" value="BAF21930.1"/>
    <property type="molecule type" value="Genomic_DNA"/>
</dbReference>
<dbReference type="EMBL" id="AP014963">
    <property type="protein sequence ID" value="BAT02184.1"/>
    <property type="molecule type" value="Genomic_DNA"/>
</dbReference>
<dbReference type="EMBL" id="AP014963">
    <property type="protein sequence ID" value="BAT02185.1"/>
    <property type="molecule type" value="Genomic_DNA"/>
</dbReference>
<dbReference type="EMBL" id="CM000144">
    <property type="protein sequence ID" value="EAZ40328.1"/>
    <property type="molecule type" value="Genomic_DNA"/>
</dbReference>
<dbReference type="EMBL" id="AK069418">
    <property type="status" value="NOT_ANNOTATED_CDS"/>
    <property type="molecule type" value="mRNA"/>
</dbReference>
<dbReference type="RefSeq" id="XP_015647442.1">
    <property type="nucleotide sequence ID" value="XM_015791956.1"/>
</dbReference>
<dbReference type="SMR" id="Q8H4S6"/>
<dbReference type="FunCoup" id="Q8H4S6">
    <property type="interactions" value="60"/>
</dbReference>
<dbReference type="STRING" id="39947.Q8H4S6"/>
<dbReference type="PaxDb" id="39947-Q8H4S6"/>
<dbReference type="EnsemblPlants" id="Os07t0566200-01">
    <property type="protein sequence ID" value="Os07t0566200-01"/>
    <property type="gene ID" value="Os07g0566200"/>
</dbReference>
<dbReference type="EnsemblPlants" id="Os07t0566200-02">
    <property type="protein sequence ID" value="Os07t0566200-02"/>
    <property type="gene ID" value="Os07g0566200"/>
</dbReference>
<dbReference type="Gramene" id="Os07t0566200-01">
    <property type="protein sequence ID" value="Os07t0566200-01"/>
    <property type="gene ID" value="Os07g0566200"/>
</dbReference>
<dbReference type="Gramene" id="Os07t0566200-02">
    <property type="protein sequence ID" value="Os07t0566200-02"/>
    <property type="gene ID" value="Os07g0566200"/>
</dbReference>
<dbReference type="KEGG" id="dosa:Os07g0566200"/>
<dbReference type="eggNOG" id="KOG0698">
    <property type="taxonomic scope" value="Eukaryota"/>
</dbReference>
<dbReference type="HOGENOM" id="CLU_013173_6_0_1"/>
<dbReference type="InParanoid" id="Q8H4S6"/>
<dbReference type="OMA" id="CQIESAY"/>
<dbReference type="OrthoDB" id="10264738at2759"/>
<dbReference type="Proteomes" id="UP000000763">
    <property type="component" value="Chromosome 7"/>
</dbReference>
<dbReference type="Proteomes" id="UP000007752">
    <property type="component" value="Chromosome 7"/>
</dbReference>
<dbReference type="Proteomes" id="UP000059680">
    <property type="component" value="Chromosome 7"/>
</dbReference>
<dbReference type="GO" id="GO:0046872">
    <property type="term" value="F:metal ion binding"/>
    <property type="evidence" value="ECO:0007669"/>
    <property type="project" value="UniProtKB-KW"/>
</dbReference>
<dbReference type="GO" id="GO:0004722">
    <property type="term" value="F:protein serine/threonine phosphatase activity"/>
    <property type="evidence" value="ECO:0000318"/>
    <property type="project" value="GO_Central"/>
</dbReference>
<dbReference type="GO" id="GO:1902531">
    <property type="term" value="P:regulation of intracellular signal transduction"/>
    <property type="evidence" value="ECO:0000318"/>
    <property type="project" value="GO_Central"/>
</dbReference>
<dbReference type="CDD" id="cd00143">
    <property type="entry name" value="PP2Cc"/>
    <property type="match status" value="1"/>
</dbReference>
<dbReference type="FunFam" id="3.60.40.10:FF:000026">
    <property type="entry name" value="probable protein phosphatase 2C 52"/>
    <property type="match status" value="1"/>
</dbReference>
<dbReference type="Gene3D" id="3.60.40.10">
    <property type="entry name" value="PPM-type phosphatase domain"/>
    <property type="match status" value="1"/>
</dbReference>
<dbReference type="InterPro" id="IPR015655">
    <property type="entry name" value="PP2C"/>
</dbReference>
<dbReference type="InterPro" id="IPR036457">
    <property type="entry name" value="PPM-type-like_dom_sf"/>
</dbReference>
<dbReference type="InterPro" id="IPR001932">
    <property type="entry name" value="PPM-type_phosphatase-like_dom"/>
</dbReference>
<dbReference type="PANTHER" id="PTHR47992">
    <property type="entry name" value="PROTEIN PHOSPHATASE"/>
    <property type="match status" value="1"/>
</dbReference>
<dbReference type="Pfam" id="PF00481">
    <property type="entry name" value="PP2C"/>
    <property type="match status" value="1"/>
</dbReference>
<dbReference type="SMART" id="SM00332">
    <property type="entry name" value="PP2Cc"/>
    <property type="match status" value="1"/>
</dbReference>
<dbReference type="SUPFAM" id="SSF81606">
    <property type="entry name" value="PP2C-like"/>
    <property type="match status" value="1"/>
</dbReference>
<dbReference type="PROSITE" id="PS51746">
    <property type="entry name" value="PPM_2"/>
    <property type="match status" value="1"/>
</dbReference>
<feature type="chain" id="PRO_0000363311" description="Probable protein phosphatase 2C 64">
    <location>
        <begin position="1"/>
        <end position="427"/>
    </location>
</feature>
<feature type="domain" description="PPM-type phosphatase" evidence="2">
    <location>
        <begin position="53"/>
        <end position="331"/>
    </location>
</feature>
<feature type="region of interest" description="Disordered" evidence="3">
    <location>
        <begin position="1"/>
        <end position="36"/>
    </location>
</feature>
<feature type="binding site" evidence="1">
    <location>
        <position position="89"/>
    </location>
    <ligand>
        <name>Mn(2+)</name>
        <dbReference type="ChEBI" id="CHEBI:29035"/>
        <label>1</label>
    </ligand>
</feature>
<feature type="binding site" evidence="1">
    <location>
        <position position="89"/>
    </location>
    <ligand>
        <name>Mn(2+)</name>
        <dbReference type="ChEBI" id="CHEBI:29035"/>
        <label>2</label>
    </ligand>
</feature>
<feature type="binding site" evidence="1">
    <location>
        <position position="90"/>
    </location>
    <ligand>
        <name>Mn(2+)</name>
        <dbReference type="ChEBI" id="CHEBI:29035"/>
        <label>1</label>
    </ligand>
</feature>
<feature type="binding site" evidence="1">
    <location>
        <position position="276"/>
    </location>
    <ligand>
        <name>Mn(2+)</name>
        <dbReference type="ChEBI" id="CHEBI:29035"/>
        <label>2</label>
    </ligand>
</feature>
<feature type="binding site" evidence="1">
    <location>
        <position position="322"/>
    </location>
    <ligand>
        <name>Mn(2+)</name>
        <dbReference type="ChEBI" id="CHEBI:29035"/>
        <label>2</label>
    </ligand>
</feature>
<feature type="sequence conflict" description="In Ref. 5; AK069418." evidence="4" ref="5">
    <original>G</original>
    <variation>E</variation>
    <location>
        <position position="64"/>
    </location>
</feature>
<accession>Q8H4S6</accession>
<accession>A0A0P0X7E4</accession>
<keyword id="KW-0378">Hydrolase</keyword>
<keyword id="KW-0460">Magnesium</keyword>
<keyword id="KW-0464">Manganese</keyword>
<keyword id="KW-0479">Metal-binding</keyword>
<keyword id="KW-0904">Protein phosphatase</keyword>
<keyword id="KW-1185">Reference proteome</keyword>